<reference key="1">
    <citation type="journal article" date="2001" name="Genome Res.">
        <title>The complete genome sequence of the lactic acid bacterium Lactococcus lactis ssp. lactis IL1403.</title>
        <authorList>
            <person name="Bolotin A."/>
            <person name="Wincker P."/>
            <person name="Mauger S."/>
            <person name="Jaillon O."/>
            <person name="Malarme K."/>
            <person name="Weissenbach J."/>
            <person name="Ehrlich S.D."/>
            <person name="Sorokin A."/>
        </authorList>
    </citation>
    <scope>NUCLEOTIDE SEQUENCE [LARGE SCALE GENOMIC DNA]</scope>
    <source>
        <strain>IL1403</strain>
    </source>
</reference>
<feature type="chain" id="PRO_0000091336" description="Elongation factor Tu">
    <location>
        <begin position="1"/>
        <end position="395"/>
    </location>
</feature>
<feature type="domain" description="tr-type G">
    <location>
        <begin position="10"/>
        <end position="204"/>
    </location>
</feature>
<feature type="region of interest" description="G1" evidence="1">
    <location>
        <begin position="19"/>
        <end position="26"/>
    </location>
</feature>
<feature type="region of interest" description="G2" evidence="1">
    <location>
        <begin position="60"/>
        <end position="64"/>
    </location>
</feature>
<feature type="region of interest" description="G3" evidence="1">
    <location>
        <begin position="81"/>
        <end position="84"/>
    </location>
</feature>
<feature type="region of interest" description="G4" evidence="1">
    <location>
        <begin position="136"/>
        <end position="139"/>
    </location>
</feature>
<feature type="region of interest" description="G5" evidence="1">
    <location>
        <begin position="174"/>
        <end position="176"/>
    </location>
</feature>
<feature type="binding site" evidence="2">
    <location>
        <begin position="19"/>
        <end position="26"/>
    </location>
    <ligand>
        <name>GTP</name>
        <dbReference type="ChEBI" id="CHEBI:37565"/>
    </ligand>
</feature>
<feature type="binding site" evidence="2">
    <location>
        <position position="26"/>
    </location>
    <ligand>
        <name>Mg(2+)</name>
        <dbReference type="ChEBI" id="CHEBI:18420"/>
    </ligand>
</feature>
<feature type="binding site" evidence="2">
    <location>
        <begin position="81"/>
        <end position="85"/>
    </location>
    <ligand>
        <name>GTP</name>
        <dbReference type="ChEBI" id="CHEBI:37565"/>
    </ligand>
</feature>
<feature type="binding site" evidence="2">
    <location>
        <begin position="136"/>
        <end position="139"/>
    </location>
    <ligand>
        <name>GTP</name>
        <dbReference type="ChEBI" id="CHEBI:37565"/>
    </ligand>
</feature>
<organism>
    <name type="scientific">Lactococcus lactis subsp. lactis (strain IL1403)</name>
    <name type="common">Streptococcus lactis</name>
    <dbReference type="NCBI Taxonomy" id="272623"/>
    <lineage>
        <taxon>Bacteria</taxon>
        <taxon>Bacillati</taxon>
        <taxon>Bacillota</taxon>
        <taxon>Bacilli</taxon>
        <taxon>Lactobacillales</taxon>
        <taxon>Streptococcaceae</taxon>
        <taxon>Lactococcus</taxon>
    </lineage>
</organism>
<evidence type="ECO:0000250" key="1"/>
<evidence type="ECO:0000255" key="2">
    <source>
        <dbReference type="HAMAP-Rule" id="MF_00118"/>
    </source>
</evidence>
<gene>
    <name evidence="2" type="primary">tuf</name>
    <name type="ordered locus">LL1861</name>
    <name type="ORF">L0371</name>
</gene>
<sequence>MAKEVYDRSKPHVNIGTIGHVDHGKTTLSAAISKVLSDKGYSKATDFASIDAAPEERERGITINTAHIEYETEKRHYAHIDAPGHADYVKNMITGAAQMDGAILVVAATDGPMPQTREHILLSRQVGVKYLIVFLNKADLVDDEELMELVEMEVRDLLSEYDFPGDDIPVIAGSALGALNGEPQWVAKVEELMDIVDEYIPTPERDTDKPLLLPVEDVFSITGRGTVASGRIERGTVKVGDEVEIVGIKEETKKAVVTGIEMFRKTLTEGLAGDNVGALLRGIQRDEIERGQVIAKPGSITPHKLFEGEVYVLSKEEGGRHTPFFDNYRPQFYFHTTDVTGSVKLPEGTEMVMPGDNVHIDVELIHPVAIEQGTTFSIREGGRTVGSGIVAEIKA</sequence>
<accession>Q9CEI0</accession>
<comment type="function">
    <text evidence="2">GTP hydrolase that promotes the GTP-dependent binding of aminoacyl-tRNA to the A-site of ribosomes during protein biosynthesis.</text>
</comment>
<comment type="catalytic activity">
    <reaction evidence="2">
        <text>GTP + H2O = GDP + phosphate + H(+)</text>
        <dbReference type="Rhea" id="RHEA:19669"/>
        <dbReference type="ChEBI" id="CHEBI:15377"/>
        <dbReference type="ChEBI" id="CHEBI:15378"/>
        <dbReference type="ChEBI" id="CHEBI:37565"/>
        <dbReference type="ChEBI" id="CHEBI:43474"/>
        <dbReference type="ChEBI" id="CHEBI:58189"/>
        <dbReference type="EC" id="3.6.5.3"/>
    </reaction>
    <physiologicalReaction direction="left-to-right" evidence="2">
        <dbReference type="Rhea" id="RHEA:19670"/>
    </physiologicalReaction>
</comment>
<comment type="subunit">
    <text evidence="2">Monomer.</text>
</comment>
<comment type="subcellular location">
    <subcellularLocation>
        <location evidence="2">Cytoplasm</location>
    </subcellularLocation>
</comment>
<comment type="similarity">
    <text evidence="2">Belongs to the TRAFAC class translation factor GTPase superfamily. Classic translation factor GTPase family. EF-Tu/EF-1A subfamily.</text>
</comment>
<dbReference type="EC" id="3.6.5.3" evidence="2"/>
<dbReference type="EMBL" id="AE005176">
    <property type="protein sequence ID" value="AAK05959.1"/>
    <property type="molecule type" value="Genomic_DNA"/>
</dbReference>
<dbReference type="PIR" id="E86857">
    <property type="entry name" value="E86857"/>
</dbReference>
<dbReference type="RefSeq" id="NP_268018.1">
    <property type="nucleotide sequence ID" value="NC_002662.1"/>
</dbReference>
<dbReference type="RefSeq" id="WP_003132374.1">
    <property type="nucleotide sequence ID" value="NC_002662.1"/>
</dbReference>
<dbReference type="SMR" id="Q9CEI0"/>
<dbReference type="PaxDb" id="272623-L0371"/>
<dbReference type="EnsemblBacteria" id="AAK05959">
    <property type="protein sequence ID" value="AAK05959"/>
    <property type="gene ID" value="L0371"/>
</dbReference>
<dbReference type="GeneID" id="89634082"/>
<dbReference type="KEGG" id="lla:L0371"/>
<dbReference type="PATRIC" id="fig|272623.7.peg.1993"/>
<dbReference type="eggNOG" id="COG0050">
    <property type="taxonomic scope" value="Bacteria"/>
</dbReference>
<dbReference type="HOGENOM" id="CLU_007265_0_1_9"/>
<dbReference type="OrthoDB" id="9804504at2"/>
<dbReference type="Proteomes" id="UP000002196">
    <property type="component" value="Chromosome"/>
</dbReference>
<dbReference type="GO" id="GO:0005829">
    <property type="term" value="C:cytosol"/>
    <property type="evidence" value="ECO:0007669"/>
    <property type="project" value="TreeGrafter"/>
</dbReference>
<dbReference type="GO" id="GO:0005525">
    <property type="term" value="F:GTP binding"/>
    <property type="evidence" value="ECO:0007669"/>
    <property type="project" value="UniProtKB-UniRule"/>
</dbReference>
<dbReference type="GO" id="GO:0003924">
    <property type="term" value="F:GTPase activity"/>
    <property type="evidence" value="ECO:0007669"/>
    <property type="project" value="InterPro"/>
</dbReference>
<dbReference type="GO" id="GO:0003746">
    <property type="term" value="F:translation elongation factor activity"/>
    <property type="evidence" value="ECO:0007669"/>
    <property type="project" value="UniProtKB-UniRule"/>
</dbReference>
<dbReference type="CDD" id="cd01884">
    <property type="entry name" value="EF_Tu"/>
    <property type="match status" value="1"/>
</dbReference>
<dbReference type="CDD" id="cd03697">
    <property type="entry name" value="EFTU_II"/>
    <property type="match status" value="1"/>
</dbReference>
<dbReference type="CDD" id="cd03707">
    <property type="entry name" value="EFTU_III"/>
    <property type="match status" value="1"/>
</dbReference>
<dbReference type="FunFam" id="2.40.30.10:FF:000001">
    <property type="entry name" value="Elongation factor Tu"/>
    <property type="match status" value="1"/>
</dbReference>
<dbReference type="FunFam" id="3.40.50.300:FF:000003">
    <property type="entry name" value="Elongation factor Tu"/>
    <property type="match status" value="1"/>
</dbReference>
<dbReference type="Gene3D" id="3.40.50.300">
    <property type="entry name" value="P-loop containing nucleotide triphosphate hydrolases"/>
    <property type="match status" value="1"/>
</dbReference>
<dbReference type="Gene3D" id="2.40.30.10">
    <property type="entry name" value="Translation factors"/>
    <property type="match status" value="2"/>
</dbReference>
<dbReference type="HAMAP" id="MF_00118_B">
    <property type="entry name" value="EF_Tu_B"/>
    <property type="match status" value="1"/>
</dbReference>
<dbReference type="InterPro" id="IPR041709">
    <property type="entry name" value="EF-Tu_GTP-bd"/>
</dbReference>
<dbReference type="InterPro" id="IPR050055">
    <property type="entry name" value="EF-Tu_GTPase"/>
</dbReference>
<dbReference type="InterPro" id="IPR004161">
    <property type="entry name" value="EFTu-like_2"/>
</dbReference>
<dbReference type="InterPro" id="IPR033720">
    <property type="entry name" value="EFTU_2"/>
</dbReference>
<dbReference type="InterPro" id="IPR031157">
    <property type="entry name" value="G_TR_CS"/>
</dbReference>
<dbReference type="InterPro" id="IPR027417">
    <property type="entry name" value="P-loop_NTPase"/>
</dbReference>
<dbReference type="InterPro" id="IPR005225">
    <property type="entry name" value="Small_GTP-bd"/>
</dbReference>
<dbReference type="InterPro" id="IPR000795">
    <property type="entry name" value="T_Tr_GTP-bd_dom"/>
</dbReference>
<dbReference type="InterPro" id="IPR009000">
    <property type="entry name" value="Transl_B-barrel_sf"/>
</dbReference>
<dbReference type="InterPro" id="IPR009001">
    <property type="entry name" value="Transl_elong_EF1A/Init_IF2_C"/>
</dbReference>
<dbReference type="InterPro" id="IPR004541">
    <property type="entry name" value="Transl_elong_EFTu/EF1A_bac/org"/>
</dbReference>
<dbReference type="InterPro" id="IPR004160">
    <property type="entry name" value="Transl_elong_EFTu/EF1A_C"/>
</dbReference>
<dbReference type="NCBIfam" id="TIGR00485">
    <property type="entry name" value="EF-Tu"/>
    <property type="match status" value="1"/>
</dbReference>
<dbReference type="NCBIfam" id="NF000766">
    <property type="entry name" value="PRK00049.1"/>
    <property type="match status" value="1"/>
</dbReference>
<dbReference type="NCBIfam" id="NF009372">
    <property type="entry name" value="PRK12735.1"/>
    <property type="match status" value="1"/>
</dbReference>
<dbReference type="NCBIfam" id="NF009373">
    <property type="entry name" value="PRK12736.1"/>
    <property type="match status" value="1"/>
</dbReference>
<dbReference type="NCBIfam" id="TIGR00231">
    <property type="entry name" value="small_GTP"/>
    <property type="match status" value="1"/>
</dbReference>
<dbReference type="PANTHER" id="PTHR43721:SF22">
    <property type="entry name" value="ELONGATION FACTOR TU, MITOCHONDRIAL"/>
    <property type="match status" value="1"/>
</dbReference>
<dbReference type="PANTHER" id="PTHR43721">
    <property type="entry name" value="ELONGATION FACTOR TU-RELATED"/>
    <property type="match status" value="1"/>
</dbReference>
<dbReference type="Pfam" id="PF00009">
    <property type="entry name" value="GTP_EFTU"/>
    <property type="match status" value="1"/>
</dbReference>
<dbReference type="Pfam" id="PF03144">
    <property type="entry name" value="GTP_EFTU_D2"/>
    <property type="match status" value="1"/>
</dbReference>
<dbReference type="Pfam" id="PF03143">
    <property type="entry name" value="GTP_EFTU_D3"/>
    <property type="match status" value="1"/>
</dbReference>
<dbReference type="PRINTS" id="PR00315">
    <property type="entry name" value="ELONGATNFCT"/>
</dbReference>
<dbReference type="SUPFAM" id="SSF50465">
    <property type="entry name" value="EF-Tu/eEF-1alpha/eIF2-gamma C-terminal domain"/>
    <property type="match status" value="1"/>
</dbReference>
<dbReference type="SUPFAM" id="SSF52540">
    <property type="entry name" value="P-loop containing nucleoside triphosphate hydrolases"/>
    <property type="match status" value="1"/>
</dbReference>
<dbReference type="SUPFAM" id="SSF50447">
    <property type="entry name" value="Translation proteins"/>
    <property type="match status" value="1"/>
</dbReference>
<dbReference type="PROSITE" id="PS00301">
    <property type="entry name" value="G_TR_1"/>
    <property type="match status" value="1"/>
</dbReference>
<dbReference type="PROSITE" id="PS51722">
    <property type="entry name" value="G_TR_2"/>
    <property type="match status" value="1"/>
</dbReference>
<keyword id="KW-0963">Cytoplasm</keyword>
<keyword id="KW-0251">Elongation factor</keyword>
<keyword id="KW-0342">GTP-binding</keyword>
<keyword id="KW-0378">Hydrolase</keyword>
<keyword id="KW-0460">Magnesium</keyword>
<keyword id="KW-0479">Metal-binding</keyword>
<keyword id="KW-0547">Nucleotide-binding</keyword>
<keyword id="KW-0648">Protein biosynthesis</keyword>
<keyword id="KW-1185">Reference proteome</keyword>
<proteinExistence type="inferred from homology"/>
<protein>
    <recommendedName>
        <fullName evidence="2">Elongation factor Tu</fullName>
        <shortName evidence="2">EF-Tu</shortName>
        <ecNumber evidence="2">3.6.5.3</ecNumber>
    </recommendedName>
</protein>
<name>EFTU_LACLA</name>